<organism>
    <name type="scientific">Caenorhabditis elegans</name>
    <dbReference type="NCBI Taxonomy" id="6239"/>
    <lineage>
        <taxon>Eukaryota</taxon>
        <taxon>Metazoa</taxon>
        <taxon>Ecdysozoa</taxon>
        <taxon>Nematoda</taxon>
        <taxon>Chromadorea</taxon>
        <taxon>Rhabditida</taxon>
        <taxon>Rhabditina</taxon>
        <taxon>Rhabditomorpha</taxon>
        <taxon>Rhabditoidea</taxon>
        <taxon>Rhabditidae</taxon>
        <taxon>Peloderinae</taxon>
        <taxon>Caenorhabditis</taxon>
    </lineage>
</organism>
<reference key="1">
    <citation type="journal article" date="1998" name="Science">
        <title>Genome sequence of the nematode C. elegans: a platform for investigating biology.</title>
        <authorList>
            <consortium name="The C. elegans sequencing consortium"/>
        </authorList>
    </citation>
    <scope>NUCLEOTIDE SEQUENCE [LARGE SCALE GENOMIC DNA]</scope>
    <source>
        <strain>Bristol N2</strain>
    </source>
</reference>
<keyword id="KW-1185">Reference proteome</keyword>
<proteinExistence type="inferred from homology"/>
<gene>
    <name evidence="2" type="primary">lido-16</name>
    <name evidence="2" type="ORF">T28D9.9</name>
</gene>
<accession>Q10026</accession>
<protein>
    <recommendedName>
        <fullName evidence="1">Uncharacterized lin-8 family protein lido-16</fullName>
    </recommendedName>
</protein>
<sequence>MDSPFNFTRRRSHVVANERRDMIQPSSSIPRPITNNIWTLNDYLNFDKSDVHTGPPRSLEIKKLILDTLKEMPELWTQRCSKKPHWELLGFNILQRTGMRIGTCQLMETFRNARKHVNAKIRKCWKEGLSKAETEIKCSNWDLFENFRFFFEFKCRHWQFPDDCDDLVVELDTEEGIISNPSLPPNEVCDQNVEILQSATKESIMPDVPEHYLDFEQHLKAKIQQALNKHPGQEKLLKNAIFTTLNGIENRDHKSLEELFSSLSSNH</sequence>
<evidence type="ECO:0000305" key="1"/>
<evidence type="ECO:0000312" key="2">
    <source>
        <dbReference type="WormBase" id="T28D9.9"/>
    </source>
</evidence>
<comment type="similarity">
    <text evidence="1">Belongs to the lin-8 family.</text>
</comment>
<dbReference type="EMBL" id="BX284602">
    <property type="protein sequence ID" value="CCD72706.1"/>
    <property type="molecule type" value="Genomic_DNA"/>
</dbReference>
<dbReference type="PIR" id="T16950">
    <property type="entry name" value="T16950"/>
</dbReference>
<dbReference type="RefSeq" id="NP_495304.2">
    <property type="nucleotide sequence ID" value="NM_062903.5"/>
</dbReference>
<dbReference type="SMR" id="Q10026"/>
<dbReference type="FunCoup" id="Q10026">
    <property type="interactions" value="638"/>
</dbReference>
<dbReference type="STRING" id="6239.T28D9.9.1"/>
<dbReference type="PaxDb" id="6239-T28D9.9"/>
<dbReference type="EnsemblMetazoa" id="T28D9.9.1">
    <property type="protein sequence ID" value="T28D9.9.1"/>
    <property type="gene ID" value="WBGene00020898"/>
</dbReference>
<dbReference type="GeneID" id="189045"/>
<dbReference type="KEGG" id="cel:CELE_T28D9.9"/>
<dbReference type="UCSC" id="T28D9.9">
    <property type="organism name" value="c. elegans"/>
</dbReference>
<dbReference type="AGR" id="WB:WBGene00020898"/>
<dbReference type="CTD" id="189045"/>
<dbReference type="WormBase" id="T28D9.9">
    <property type="protein sequence ID" value="CE50178"/>
    <property type="gene ID" value="WBGene00020898"/>
    <property type="gene designation" value="lido-16"/>
</dbReference>
<dbReference type="GeneTree" id="ENSGT00390000006206"/>
<dbReference type="HOGENOM" id="CLU_2063599_0_0_1"/>
<dbReference type="InParanoid" id="Q10026"/>
<dbReference type="PRO" id="PR:Q10026"/>
<dbReference type="Proteomes" id="UP000001940">
    <property type="component" value="Chromosome II"/>
</dbReference>
<dbReference type="Bgee" id="WBGene00020898">
    <property type="expression patterns" value="Expressed in pharyngeal muscle cell (C elegans) and 2 other cell types or tissues"/>
</dbReference>
<dbReference type="GO" id="GO:0005634">
    <property type="term" value="C:nucleus"/>
    <property type="evidence" value="ECO:0000318"/>
    <property type="project" value="GO_Central"/>
</dbReference>
<dbReference type="InterPro" id="IPR005020">
    <property type="entry name" value="LIN-8"/>
</dbReference>
<dbReference type="PANTHER" id="PTHR32020">
    <property type="entry name" value="LIN-8 DOMAIN CONTAINING-RELATED"/>
    <property type="match status" value="1"/>
</dbReference>
<dbReference type="PANTHER" id="PTHR32020:SF7">
    <property type="entry name" value="PROTEIN CBG02668"/>
    <property type="match status" value="1"/>
</dbReference>
<dbReference type="Pfam" id="PF03353">
    <property type="entry name" value="Lin-8"/>
    <property type="match status" value="1"/>
</dbReference>
<feature type="chain" id="PRO_0000065487" description="Uncharacterized lin-8 family protein lido-16">
    <location>
        <begin position="1"/>
        <end position="267"/>
    </location>
</feature>
<name>LID16_CAEEL</name>